<comment type="function">
    <text evidence="1">Catalyzes the NAD-dependent oxidative cleavage of spermidine and the subsequent transfer of the butylamine moiety of spermidine to the epsilon-amino group of a specific lysine residue of the eIF-5A precursor protein to form the intermediate deoxyhypusine residue.</text>
</comment>
<comment type="catalytic activity">
    <reaction>
        <text>[eIF5A protein]-L-lysine + spermidine = [eIF5A protein]-deoxyhypusine + propane-1,3-diamine</text>
        <dbReference type="Rhea" id="RHEA:33299"/>
        <dbReference type="Rhea" id="RHEA-COMP:10143"/>
        <dbReference type="Rhea" id="RHEA-COMP:10144"/>
        <dbReference type="ChEBI" id="CHEBI:29969"/>
        <dbReference type="ChEBI" id="CHEBI:57484"/>
        <dbReference type="ChEBI" id="CHEBI:57834"/>
        <dbReference type="ChEBI" id="CHEBI:82657"/>
        <dbReference type="EC" id="2.5.1.46"/>
    </reaction>
</comment>
<comment type="cofactor">
    <cofactor evidence="1">
        <name>NAD(+)</name>
        <dbReference type="ChEBI" id="CHEBI:57540"/>
    </cofactor>
</comment>
<comment type="pathway">
    <text>Protein modification; eIF5A hypusination.</text>
</comment>
<comment type="similarity">
    <text evidence="2">Belongs to the deoxyhypusine synthase family.</text>
</comment>
<reference key="1">
    <citation type="journal article" date="2003" name="Mol. Microbiol.">
        <title>An integrated analysis of the genome of the hyperthermophilic archaeon Pyrococcus abyssi.</title>
        <authorList>
            <person name="Cohen G.N."/>
            <person name="Barbe V."/>
            <person name="Flament D."/>
            <person name="Galperin M."/>
            <person name="Heilig R."/>
            <person name="Lecompte O."/>
            <person name="Poch O."/>
            <person name="Prieur D."/>
            <person name="Querellou J."/>
            <person name="Ripp R."/>
            <person name="Thierry J.-C."/>
            <person name="Van der Oost J."/>
            <person name="Weissenbach J."/>
            <person name="Zivanovic Y."/>
            <person name="Forterre P."/>
        </authorList>
    </citation>
    <scope>NUCLEOTIDE SEQUENCE [LARGE SCALE GENOMIC DNA]</scope>
    <source>
        <strain>GE5 / Orsay</strain>
    </source>
</reference>
<reference key="2">
    <citation type="journal article" date="2012" name="Curr. Microbiol.">
        <title>Re-annotation of two hyperthermophilic archaea Pyrococcus abyssi GE5 and Pyrococcus furiosus DSM 3638.</title>
        <authorList>
            <person name="Gao J."/>
            <person name="Wang J."/>
        </authorList>
    </citation>
    <scope>GENOME REANNOTATION</scope>
    <source>
        <strain>GE5 / Orsay</strain>
    </source>
</reference>
<proteinExistence type="inferred from homology"/>
<accession>Q9V0N5</accession>
<accession>G8ZGV5</accession>
<organism>
    <name type="scientific">Pyrococcus abyssi (strain GE5 / Orsay)</name>
    <dbReference type="NCBI Taxonomy" id="272844"/>
    <lineage>
        <taxon>Archaea</taxon>
        <taxon>Methanobacteriati</taxon>
        <taxon>Methanobacteriota</taxon>
        <taxon>Thermococci</taxon>
        <taxon>Thermococcales</taxon>
        <taxon>Thermococcaceae</taxon>
        <taxon>Pyrococcus</taxon>
    </lineage>
</organism>
<evidence type="ECO:0000250" key="1"/>
<evidence type="ECO:0000305" key="2"/>
<dbReference type="EC" id="2.5.1.46"/>
<dbReference type="EMBL" id="AJ248285">
    <property type="protein sequence ID" value="CAB49668.1"/>
    <property type="molecule type" value="Genomic_DNA"/>
</dbReference>
<dbReference type="EMBL" id="HE613800">
    <property type="protein sequence ID" value="CCE70150.1"/>
    <property type="molecule type" value="Genomic_DNA"/>
</dbReference>
<dbReference type="PIR" id="C75119">
    <property type="entry name" value="C75119"/>
</dbReference>
<dbReference type="RefSeq" id="WP_010867876.1">
    <property type="nucleotide sequence ID" value="NC_000868.1"/>
</dbReference>
<dbReference type="SMR" id="Q9V0N5"/>
<dbReference type="STRING" id="272844.PAB0511"/>
<dbReference type="KEGG" id="pab:PAB0511"/>
<dbReference type="PATRIC" id="fig|272844.11.peg.794"/>
<dbReference type="eggNOG" id="arCOG04142">
    <property type="taxonomic scope" value="Archaea"/>
</dbReference>
<dbReference type="HOGENOM" id="CLU_039781_0_0_2"/>
<dbReference type="OrthoDB" id="17730at2157"/>
<dbReference type="PhylomeDB" id="Q9V0N5"/>
<dbReference type="UniPathway" id="UPA00354"/>
<dbReference type="Proteomes" id="UP000000810">
    <property type="component" value="Chromosome"/>
</dbReference>
<dbReference type="Proteomes" id="UP000009139">
    <property type="component" value="Chromosome"/>
</dbReference>
<dbReference type="GO" id="GO:0005737">
    <property type="term" value="C:cytoplasm"/>
    <property type="evidence" value="ECO:0007669"/>
    <property type="project" value="TreeGrafter"/>
</dbReference>
<dbReference type="GO" id="GO:0034038">
    <property type="term" value="F:deoxyhypusine synthase activity"/>
    <property type="evidence" value="ECO:0007669"/>
    <property type="project" value="UniProtKB-UniRule"/>
</dbReference>
<dbReference type="FunFam" id="3.40.910.10:FF:000004">
    <property type="entry name" value="Probable deoxyhypusine synthase"/>
    <property type="match status" value="1"/>
</dbReference>
<dbReference type="Gene3D" id="3.40.910.10">
    <property type="entry name" value="Deoxyhypusine synthase"/>
    <property type="match status" value="1"/>
</dbReference>
<dbReference type="HAMAP" id="MF_00153">
    <property type="entry name" value="DHS"/>
    <property type="match status" value="1"/>
</dbReference>
<dbReference type="InterPro" id="IPR022899">
    <property type="entry name" value="Deoxyhypus_synthase_arc"/>
</dbReference>
<dbReference type="InterPro" id="IPR002773">
    <property type="entry name" value="Deoxyhypusine_synthase"/>
</dbReference>
<dbReference type="InterPro" id="IPR036982">
    <property type="entry name" value="Deoxyhypusine_synthase_sf"/>
</dbReference>
<dbReference type="InterPro" id="IPR029035">
    <property type="entry name" value="DHS-like_NAD/FAD-binding_dom"/>
</dbReference>
<dbReference type="NCBIfam" id="TIGR00321">
    <property type="entry name" value="dhys"/>
    <property type="match status" value="1"/>
</dbReference>
<dbReference type="NCBIfam" id="NF003052">
    <property type="entry name" value="PRK03971.1"/>
    <property type="match status" value="1"/>
</dbReference>
<dbReference type="PANTHER" id="PTHR11703">
    <property type="entry name" value="DEOXYHYPUSINE SYNTHASE"/>
    <property type="match status" value="1"/>
</dbReference>
<dbReference type="PANTHER" id="PTHR11703:SF0">
    <property type="entry name" value="DEOXYHYPUSINE SYNTHASE"/>
    <property type="match status" value="1"/>
</dbReference>
<dbReference type="Pfam" id="PF01916">
    <property type="entry name" value="DS"/>
    <property type="match status" value="1"/>
</dbReference>
<dbReference type="SUPFAM" id="SSF52467">
    <property type="entry name" value="DHS-like NAD/FAD-binding domain"/>
    <property type="match status" value="1"/>
</dbReference>
<name>DHYS_PYRAB</name>
<keyword id="KW-0386">Hypusine biosynthesis</keyword>
<keyword id="KW-0520">NAD</keyword>
<keyword id="KW-0808">Transferase</keyword>
<sequence length="335" mass="37997">MKAKDIVLKKSEEIEGLAIEGPWLDEVESLEGVISYYEKIGFQATHLGKAVKIWRKVEEKRKGGEEVRVFLGYTSNIVSSGLREIIAWLVKERKVDVIVTTAGGIEEDFIKTLKPFILGDWEVNDAELREKGINRIGNIFVPNDRYIEFEKYMVPFFERILDIERKLKRPLTASEFIYEMGRYMDEVLGKEKEKSIIYWAYKRDVPIFCPAITDGSIGDMLYFFKEERHDSKLVIDIANDIVKLNNLAITAKETASIILGGSLPKHAIINANLFRGGTDYAIYISTAVPWDGSLSGAPPSEGVSWGKIKAKADYVEIWADATLVFPILVWMVMKA</sequence>
<gene>
    <name type="primary">dys</name>
    <name type="ordered locus">PYRAB07540</name>
    <name type="ORF">PAB0511</name>
</gene>
<feature type="chain" id="PRO_0000134502" description="Probable deoxyhypusine synthase">
    <location>
        <begin position="1"/>
        <end position="335"/>
    </location>
</feature>
<feature type="active site" description="Nucleophile" evidence="1">
    <location>
        <position position="307"/>
    </location>
</feature>
<protein>
    <recommendedName>
        <fullName>Probable deoxyhypusine synthase</fullName>
        <shortName>DHS</shortName>
        <ecNumber>2.5.1.46</ecNumber>
    </recommendedName>
</protein>